<comment type="function">
    <text evidence="1">NQR complex catalyzes the reduction of ubiquinone-1 to ubiquinol by two successive reactions, coupled with the transport of Na(+) ions from the cytoplasm to the periplasm. NqrA to NqrE are probably involved in the second step, the conversion of ubisemiquinone to ubiquinol.</text>
</comment>
<comment type="catalytic activity">
    <reaction evidence="1">
        <text>a ubiquinone + n Na(+)(in) + NADH + H(+) = a ubiquinol + n Na(+)(out) + NAD(+)</text>
        <dbReference type="Rhea" id="RHEA:47748"/>
        <dbReference type="Rhea" id="RHEA-COMP:9565"/>
        <dbReference type="Rhea" id="RHEA-COMP:9566"/>
        <dbReference type="ChEBI" id="CHEBI:15378"/>
        <dbReference type="ChEBI" id="CHEBI:16389"/>
        <dbReference type="ChEBI" id="CHEBI:17976"/>
        <dbReference type="ChEBI" id="CHEBI:29101"/>
        <dbReference type="ChEBI" id="CHEBI:57540"/>
        <dbReference type="ChEBI" id="CHEBI:57945"/>
        <dbReference type="EC" id="7.2.1.1"/>
    </reaction>
</comment>
<comment type="cofactor">
    <cofactor evidence="1">
        <name>FMN</name>
        <dbReference type="ChEBI" id="CHEBI:58210"/>
    </cofactor>
</comment>
<comment type="subunit">
    <text evidence="1">Composed of six subunits; NqrA, NqrB, NqrC, NqrD, NqrE and NqrF.</text>
</comment>
<comment type="subcellular location">
    <subcellularLocation>
        <location evidence="1">Cell inner membrane</location>
        <topology evidence="1">Single-pass membrane protein</topology>
    </subcellularLocation>
</comment>
<comment type="similarity">
    <text evidence="1">Belongs to the NqrC family.</text>
</comment>
<keyword id="KW-0997">Cell inner membrane</keyword>
<keyword id="KW-1003">Cell membrane</keyword>
<keyword id="KW-0285">Flavoprotein</keyword>
<keyword id="KW-0288">FMN</keyword>
<keyword id="KW-0406">Ion transport</keyword>
<keyword id="KW-0472">Membrane</keyword>
<keyword id="KW-0520">NAD</keyword>
<keyword id="KW-0597">Phosphoprotein</keyword>
<keyword id="KW-1185">Reference proteome</keyword>
<keyword id="KW-0915">Sodium</keyword>
<keyword id="KW-0739">Sodium transport</keyword>
<keyword id="KW-1278">Translocase</keyword>
<keyword id="KW-0812">Transmembrane</keyword>
<keyword id="KW-1133">Transmembrane helix</keyword>
<keyword id="KW-0813">Transport</keyword>
<keyword id="KW-0830">Ubiquinone</keyword>
<gene>
    <name evidence="1" type="primary">nqrC</name>
    <name type="ordered locus">PA2997</name>
</gene>
<sequence length="261" mass="27780">MANQESTTRTLLVALVVCLVSSVFVAGAAVALKPTQAENRLLDKQRSILAIAGLGEPGMSGKEVKALFDSRITAKVVDLQSGTFSDAQDPLGYDPLKAAKDPALSDALPAAEDIASIKRRERYTTVYLVETDGKLDTLILPVRGYGLWSTLYGFLALKGDLNTVAGFGFYQHGETPGLGGEVDNPKWKALWVGKTLYDAQGDLAVQIIKGSVDPQSAKATHQVDGLAGATLTSKGVDNLLHFWLGKDGFDAFLANLRKGEA</sequence>
<evidence type="ECO:0000255" key="1">
    <source>
        <dbReference type="HAMAP-Rule" id="MF_00427"/>
    </source>
</evidence>
<organism>
    <name type="scientific">Pseudomonas aeruginosa (strain ATCC 15692 / DSM 22644 / CIP 104116 / JCM 14847 / LMG 12228 / 1C / PRS 101 / PAO1)</name>
    <dbReference type="NCBI Taxonomy" id="208964"/>
    <lineage>
        <taxon>Bacteria</taxon>
        <taxon>Pseudomonadati</taxon>
        <taxon>Pseudomonadota</taxon>
        <taxon>Gammaproteobacteria</taxon>
        <taxon>Pseudomonadales</taxon>
        <taxon>Pseudomonadaceae</taxon>
        <taxon>Pseudomonas</taxon>
    </lineage>
</organism>
<protein>
    <recommendedName>
        <fullName evidence="1">Na(+)-translocating NADH-quinone reductase subunit C</fullName>
        <shortName evidence="1">Na(+)-NQR subunit C</shortName>
        <shortName evidence="1">Na(+)-translocating NQR subunit C</shortName>
        <ecNumber evidence="1">7.2.1.1</ecNumber>
    </recommendedName>
    <alternativeName>
        <fullName evidence="1">NQR complex subunit C</fullName>
    </alternativeName>
    <alternativeName>
        <fullName evidence="1">NQR-1 subunit C</fullName>
    </alternativeName>
</protein>
<name>NQRC_PSEAE</name>
<reference key="1">
    <citation type="journal article" date="2000" name="Nature">
        <title>Complete genome sequence of Pseudomonas aeruginosa PAO1, an opportunistic pathogen.</title>
        <authorList>
            <person name="Stover C.K."/>
            <person name="Pham X.-Q.T."/>
            <person name="Erwin A.L."/>
            <person name="Mizoguchi S.D."/>
            <person name="Warrener P."/>
            <person name="Hickey M.J."/>
            <person name="Brinkman F.S.L."/>
            <person name="Hufnagle W.O."/>
            <person name="Kowalik D.J."/>
            <person name="Lagrou M."/>
            <person name="Garber R.L."/>
            <person name="Goltry L."/>
            <person name="Tolentino E."/>
            <person name="Westbrock-Wadman S."/>
            <person name="Yuan Y."/>
            <person name="Brody L.L."/>
            <person name="Coulter S.N."/>
            <person name="Folger K.R."/>
            <person name="Kas A."/>
            <person name="Larbig K."/>
            <person name="Lim R.M."/>
            <person name="Smith K.A."/>
            <person name="Spencer D.H."/>
            <person name="Wong G.K.-S."/>
            <person name="Wu Z."/>
            <person name="Paulsen I.T."/>
            <person name="Reizer J."/>
            <person name="Saier M.H. Jr."/>
            <person name="Hancock R.E.W."/>
            <person name="Lory S."/>
            <person name="Olson M.V."/>
        </authorList>
    </citation>
    <scope>NUCLEOTIDE SEQUENCE [LARGE SCALE GENOMIC DNA]</scope>
    <source>
        <strain>ATCC 15692 / DSM 22644 / CIP 104116 / JCM 14847 / LMG 12228 / 1C / PRS 101 / PAO1</strain>
    </source>
</reference>
<accession>Q9HZK8</accession>
<dbReference type="EC" id="7.2.1.1" evidence="1"/>
<dbReference type="EMBL" id="AE004091">
    <property type="protein sequence ID" value="AAG06385.1"/>
    <property type="molecule type" value="Genomic_DNA"/>
</dbReference>
<dbReference type="PIR" id="F83272">
    <property type="entry name" value="F83272"/>
</dbReference>
<dbReference type="RefSeq" id="NP_251687.1">
    <property type="nucleotide sequence ID" value="NC_002516.2"/>
</dbReference>
<dbReference type="RefSeq" id="WP_003105182.1">
    <property type="nucleotide sequence ID" value="NZ_QZGE01000009.1"/>
</dbReference>
<dbReference type="SMR" id="Q9HZK8"/>
<dbReference type="STRING" id="208964.PA2997"/>
<dbReference type="PaxDb" id="208964-PA2997"/>
<dbReference type="DNASU" id="880204"/>
<dbReference type="GeneID" id="880204"/>
<dbReference type="KEGG" id="pae:PA2997"/>
<dbReference type="PATRIC" id="fig|208964.12.peg.3145"/>
<dbReference type="PseudoCAP" id="PA2997"/>
<dbReference type="HOGENOM" id="CLU_077882_0_1_6"/>
<dbReference type="InParanoid" id="Q9HZK8"/>
<dbReference type="OrthoDB" id="9786835at2"/>
<dbReference type="PhylomeDB" id="Q9HZK8"/>
<dbReference type="BioCyc" id="PAER208964:G1FZ6-3049-MONOMER"/>
<dbReference type="PHI-base" id="PHI:8943"/>
<dbReference type="Proteomes" id="UP000002438">
    <property type="component" value="Chromosome"/>
</dbReference>
<dbReference type="GO" id="GO:0005886">
    <property type="term" value="C:plasma membrane"/>
    <property type="evidence" value="ECO:0007669"/>
    <property type="project" value="UniProtKB-SubCell"/>
</dbReference>
<dbReference type="GO" id="GO:0010181">
    <property type="term" value="F:FMN binding"/>
    <property type="evidence" value="ECO:0007669"/>
    <property type="project" value="UniProtKB-UniRule"/>
</dbReference>
<dbReference type="GO" id="GO:0016655">
    <property type="term" value="F:oxidoreductase activity, acting on NAD(P)H, quinone or similar compound as acceptor"/>
    <property type="evidence" value="ECO:0007669"/>
    <property type="project" value="UniProtKB-UniRule"/>
</dbReference>
<dbReference type="GO" id="GO:0006814">
    <property type="term" value="P:sodium ion transport"/>
    <property type="evidence" value="ECO:0007669"/>
    <property type="project" value="UniProtKB-UniRule"/>
</dbReference>
<dbReference type="HAMAP" id="MF_00427">
    <property type="entry name" value="NqrC"/>
    <property type="match status" value="1"/>
</dbReference>
<dbReference type="InterPro" id="IPR007329">
    <property type="entry name" value="FMN-bd"/>
</dbReference>
<dbReference type="InterPro" id="IPR010204">
    <property type="entry name" value="NqrC"/>
</dbReference>
<dbReference type="NCBIfam" id="TIGR01938">
    <property type="entry name" value="nqrC"/>
    <property type="match status" value="1"/>
</dbReference>
<dbReference type="NCBIfam" id="NF003749">
    <property type="entry name" value="PRK05346.1-5"/>
    <property type="match status" value="1"/>
</dbReference>
<dbReference type="PANTHER" id="PTHR37838">
    <property type="entry name" value="NA(+)-TRANSLOCATING NADH-QUINONE REDUCTASE SUBUNIT C"/>
    <property type="match status" value="1"/>
</dbReference>
<dbReference type="PANTHER" id="PTHR37838:SF1">
    <property type="entry name" value="NA(+)-TRANSLOCATING NADH-QUINONE REDUCTASE SUBUNIT C"/>
    <property type="match status" value="1"/>
</dbReference>
<dbReference type="Pfam" id="PF04205">
    <property type="entry name" value="FMN_bind"/>
    <property type="match status" value="1"/>
</dbReference>
<dbReference type="PIRSF" id="PIRSF009437">
    <property type="entry name" value="NQR-1_subunit_C"/>
    <property type="match status" value="1"/>
</dbReference>
<dbReference type="SMART" id="SM00900">
    <property type="entry name" value="FMN_bind"/>
    <property type="match status" value="1"/>
</dbReference>
<feature type="chain" id="PRO_0000214220" description="Na(+)-translocating NADH-quinone reductase subunit C">
    <location>
        <begin position="1"/>
        <end position="261"/>
    </location>
</feature>
<feature type="transmembrane region" description="Helical" evidence="1">
    <location>
        <begin position="11"/>
        <end position="31"/>
    </location>
</feature>
<feature type="modified residue" description="FMN phosphoryl threonine" evidence="1">
    <location>
        <position position="230"/>
    </location>
</feature>
<proteinExistence type="inferred from homology"/>